<comment type="function">
    <text evidence="1">ATP-dependent carboxylate-amine ligase which exhibits weak glutamate--cysteine ligase activity.</text>
</comment>
<comment type="catalytic activity">
    <reaction evidence="1">
        <text>L-cysteine + L-glutamate + ATP = gamma-L-glutamyl-L-cysteine + ADP + phosphate + H(+)</text>
        <dbReference type="Rhea" id="RHEA:13285"/>
        <dbReference type="ChEBI" id="CHEBI:15378"/>
        <dbReference type="ChEBI" id="CHEBI:29985"/>
        <dbReference type="ChEBI" id="CHEBI:30616"/>
        <dbReference type="ChEBI" id="CHEBI:35235"/>
        <dbReference type="ChEBI" id="CHEBI:43474"/>
        <dbReference type="ChEBI" id="CHEBI:58173"/>
        <dbReference type="ChEBI" id="CHEBI:456216"/>
        <dbReference type="EC" id="6.3.2.2"/>
    </reaction>
</comment>
<comment type="similarity">
    <text evidence="1">Belongs to the glutamate--cysteine ligase type 2 family. YbdK subfamily.</text>
</comment>
<evidence type="ECO:0000255" key="1">
    <source>
        <dbReference type="HAMAP-Rule" id="MF_01609"/>
    </source>
</evidence>
<dbReference type="EC" id="6.3.2.2" evidence="1"/>
<dbReference type="EMBL" id="CR628336">
    <property type="protein sequence ID" value="CAH11816.1"/>
    <property type="molecule type" value="Genomic_DNA"/>
</dbReference>
<dbReference type="RefSeq" id="WP_011213216.1">
    <property type="nucleotide sequence ID" value="NC_006368.1"/>
</dbReference>
<dbReference type="SMR" id="Q5X7D7"/>
<dbReference type="KEGG" id="lpp:lpp0668"/>
<dbReference type="LegioList" id="lpp0668"/>
<dbReference type="HOGENOM" id="CLU_044848_1_1_6"/>
<dbReference type="GO" id="GO:0005524">
    <property type="term" value="F:ATP binding"/>
    <property type="evidence" value="ECO:0007669"/>
    <property type="project" value="UniProtKB-KW"/>
</dbReference>
<dbReference type="GO" id="GO:0004357">
    <property type="term" value="F:glutamate-cysteine ligase activity"/>
    <property type="evidence" value="ECO:0007669"/>
    <property type="project" value="UniProtKB-EC"/>
</dbReference>
<dbReference type="GO" id="GO:0042398">
    <property type="term" value="P:modified amino acid biosynthetic process"/>
    <property type="evidence" value="ECO:0007669"/>
    <property type="project" value="InterPro"/>
</dbReference>
<dbReference type="Gene3D" id="3.30.590.20">
    <property type="match status" value="1"/>
</dbReference>
<dbReference type="HAMAP" id="MF_01609">
    <property type="entry name" value="Glu_cys_ligase_2"/>
    <property type="match status" value="1"/>
</dbReference>
<dbReference type="InterPro" id="IPR050141">
    <property type="entry name" value="GCL_type2/YbdK_subfam"/>
</dbReference>
<dbReference type="InterPro" id="IPR006336">
    <property type="entry name" value="GCS2"/>
</dbReference>
<dbReference type="InterPro" id="IPR014746">
    <property type="entry name" value="Gln_synth/guanido_kin_cat_dom"/>
</dbReference>
<dbReference type="InterPro" id="IPR011793">
    <property type="entry name" value="YbdK"/>
</dbReference>
<dbReference type="NCBIfam" id="TIGR02050">
    <property type="entry name" value="gshA_cyan_rel"/>
    <property type="match status" value="1"/>
</dbReference>
<dbReference type="NCBIfam" id="NF010040">
    <property type="entry name" value="PRK13516.1"/>
    <property type="match status" value="1"/>
</dbReference>
<dbReference type="PANTHER" id="PTHR36510">
    <property type="entry name" value="GLUTAMATE--CYSTEINE LIGASE 2-RELATED"/>
    <property type="match status" value="1"/>
</dbReference>
<dbReference type="PANTHER" id="PTHR36510:SF1">
    <property type="entry name" value="GLUTAMATE--CYSTEINE LIGASE 2-RELATED"/>
    <property type="match status" value="1"/>
</dbReference>
<dbReference type="Pfam" id="PF04107">
    <property type="entry name" value="GCS2"/>
    <property type="match status" value="1"/>
</dbReference>
<dbReference type="SUPFAM" id="SSF55931">
    <property type="entry name" value="Glutamine synthetase/guanido kinase"/>
    <property type="match status" value="1"/>
</dbReference>
<accession>Q5X7D7</accession>
<name>GCS21_LEGPA</name>
<feature type="chain" id="PRO_0000218200" description="Putative glutamate--cysteine ligase 2-1">
    <location>
        <begin position="1"/>
        <end position="373"/>
    </location>
</feature>
<keyword id="KW-0067">ATP-binding</keyword>
<keyword id="KW-0436">Ligase</keyword>
<keyword id="KW-0547">Nucleotide-binding</keyword>
<sequence>MPLQPFKTSNLLTMGVELELQLISLSNFDLTAASPDILELLGRSSFPGSFTPEITESMLEIATDVHEEYDQLLKQLFHIRDTLVTVGDRLNIGICGGGTHPFQMWSNQRIFNKTRFIEVSELYGYLTKQFTIFGQHIHIGCEDGNQALFLLHSLNRYIPHFIALSASSPFVQSKDTLYNSARLNSVFAFPLSGRAPFVLNWDEFSLGYFEKMEHTGIVKSMKDFYWDLRPKPEFGTIEMRVCDSPLTVERAAALACYMQALCSYLLENKEPLPHEDDYLVYNYNRFQACRFGLDGTLVHPKTYEQILLREDILTTLRRLKPYANQLNSTMALEHIYEITHKGSDASFLREKYAEHRTLESVVNESLKQFRSSK</sequence>
<organism>
    <name type="scientific">Legionella pneumophila (strain Paris)</name>
    <dbReference type="NCBI Taxonomy" id="297246"/>
    <lineage>
        <taxon>Bacteria</taxon>
        <taxon>Pseudomonadati</taxon>
        <taxon>Pseudomonadota</taxon>
        <taxon>Gammaproteobacteria</taxon>
        <taxon>Legionellales</taxon>
        <taxon>Legionellaceae</taxon>
        <taxon>Legionella</taxon>
    </lineage>
</organism>
<reference key="1">
    <citation type="journal article" date="2004" name="Nat. Genet.">
        <title>Evidence in the Legionella pneumophila genome for exploitation of host cell functions and high genome plasticity.</title>
        <authorList>
            <person name="Cazalet C."/>
            <person name="Rusniok C."/>
            <person name="Brueggemann H."/>
            <person name="Zidane N."/>
            <person name="Magnier A."/>
            <person name="Ma L."/>
            <person name="Tichit M."/>
            <person name="Jarraud S."/>
            <person name="Bouchier C."/>
            <person name="Vandenesch F."/>
            <person name="Kunst F."/>
            <person name="Etienne J."/>
            <person name="Glaser P."/>
            <person name="Buchrieser C."/>
        </authorList>
    </citation>
    <scope>NUCLEOTIDE SEQUENCE [LARGE SCALE GENOMIC DNA]</scope>
    <source>
        <strain>Paris</strain>
    </source>
</reference>
<protein>
    <recommendedName>
        <fullName evidence="1">Putative glutamate--cysteine ligase 2-1</fullName>
        <ecNumber evidence="1">6.3.2.2</ecNumber>
    </recommendedName>
    <alternativeName>
        <fullName evidence="1">Gamma-glutamylcysteine synthetase 2-1</fullName>
        <shortName evidence="1">GCS 2-1</shortName>
        <shortName evidence="1">Gamma-GCS 2-1</shortName>
    </alternativeName>
</protein>
<gene>
    <name type="ordered locus">lpp0668</name>
</gene>
<proteinExistence type="inferred from homology"/>